<comment type="function">
    <text evidence="1">The UvrABC repair system catalyzes the recognition and processing of DNA lesions. A damage recognition complex composed of 2 UvrA and 2 UvrB subunits scans DNA for abnormalities. Upon binding of the UvrA(2)B(2) complex to a putative damaged site, the DNA wraps around one UvrB monomer. DNA wrap is dependent on ATP binding by UvrB and probably causes local melting of the DNA helix, facilitating insertion of UvrB beta-hairpin between the DNA strands. Then UvrB probes one DNA strand for the presence of a lesion. If a lesion is found the UvrA subunits dissociate and the UvrB-DNA preincision complex is formed. This complex is subsequently bound by UvrC and the second UvrB is released. If no lesion is found, the DNA wraps around the other UvrB subunit that will check the other stand for damage.</text>
</comment>
<comment type="subunit">
    <text evidence="1">Forms a heterotetramer with UvrA during the search for lesions. Interacts with UvrC in an incision complex.</text>
</comment>
<comment type="subcellular location">
    <subcellularLocation>
        <location evidence="1">Cytoplasm</location>
    </subcellularLocation>
</comment>
<comment type="domain">
    <text evidence="1">The beta-hairpin motif is involved in DNA binding.</text>
</comment>
<comment type="similarity">
    <text evidence="1">Belongs to the UvrB family.</text>
</comment>
<name>UVRB_HELAH</name>
<sequence length="658" mass="75989">MPLFDLKSPYSLAGDQPQAIDTLTKSLKNKNHYQTLVGVTGSGKTYTMANIIAQTNKPTLIMSHNKTLCAQLYSEFKAFFPHNRVEYFISHFDYYQPESYIPRRDLFIEKDSSINDDLERLRLSATTSLLGYDDVIVIASVSANYGLGNPEEYLKVMEKIKVGEKRAYKSFLLKLVEMGYSRNEVVFDRGSFRAMGECVDIFPAYNDAEFIRIEFFGDEIERIAVFDALERNEIKRLDSVMLYAASQFAVGSERLNLAIKSIEDELALRLKFFKEQDKILEYNRLKQRTEHDLEMISATGVCKGIENYARHFTGKAPNETPFCLFDYLGIFEREFLVIVDESHVSLPQFGGMYAGDMSRKSVLVEYGFRLPSALDNRPLKFDEFIHKNCQFLFVSATPNKLELELSKKNVAEQIIRPTGLLDPKFEVRDSDKQVQDLFDEIKLVVARDERVLITTLTKKMAEELCKYYAEWGLKVRYMHSEIDAIERNHIIRSLRLKEFDVLIGINLLREGLDLPEVSLVAIMDADKEGFLRSETSLIQTMGRAARNANGKVLLYAKKITQSMQKAFETTTYRRAKQEEFNKLHNITPKTVTRALEEELKLRDDETKIAKALKKDKIPKSEREKIIKELDKKMRECAKNLDFEEAMHLRDEIAKLRTL</sequence>
<accession>Q17YL7</accession>
<evidence type="ECO:0000255" key="1">
    <source>
        <dbReference type="HAMAP-Rule" id="MF_00204"/>
    </source>
</evidence>
<gene>
    <name evidence="1" type="primary">uvrB</name>
    <name type="ordered locus">Hac_0427</name>
</gene>
<reference key="1">
    <citation type="journal article" date="2006" name="PLoS Genet.">
        <title>Who ate whom? Adaptive Helicobacter genomic changes that accompanied a host jump from early humans to large felines.</title>
        <authorList>
            <person name="Eppinger M."/>
            <person name="Baar C."/>
            <person name="Linz B."/>
            <person name="Raddatz G."/>
            <person name="Lanz C."/>
            <person name="Keller H."/>
            <person name="Morelli G."/>
            <person name="Gressmann H."/>
            <person name="Achtman M."/>
            <person name="Schuster S.C."/>
        </authorList>
    </citation>
    <scope>NUCLEOTIDE SEQUENCE [LARGE SCALE GENOMIC DNA]</scope>
    <source>
        <strain>Sheeba</strain>
    </source>
</reference>
<dbReference type="EMBL" id="AM260522">
    <property type="protein sequence ID" value="CAJ99259.1"/>
    <property type="molecule type" value="Genomic_DNA"/>
</dbReference>
<dbReference type="RefSeq" id="WP_011577373.1">
    <property type="nucleotide sequence ID" value="NC_008229.1"/>
</dbReference>
<dbReference type="SMR" id="Q17YL7"/>
<dbReference type="STRING" id="382638.Hac_0427"/>
<dbReference type="GeneID" id="31757933"/>
<dbReference type="KEGG" id="hac:Hac_0427"/>
<dbReference type="eggNOG" id="COG0556">
    <property type="taxonomic scope" value="Bacteria"/>
</dbReference>
<dbReference type="HOGENOM" id="CLU_009621_2_1_7"/>
<dbReference type="OrthoDB" id="9806651at2"/>
<dbReference type="BioCyc" id="HACI382638:HAC_RS01945-MONOMER"/>
<dbReference type="Proteomes" id="UP000000775">
    <property type="component" value="Chromosome"/>
</dbReference>
<dbReference type="GO" id="GO:0005737">
    <property type="term" value="C:cytoplasm"/>
    <property type="evidence" value="ECO:0007669"/>
    <property type="project" value="UniProtKB-SubCell"/>
</dbReference>
<dbReference type="GO" id="GO:0009380">
    <property type="term" value="C:excinuclease repair complex"/>
    <property type="evidence" value="ECO:0007669"/>
    <property type="project" value="InterPro"/>
</dbReference>
<dbReference type="GO" id="GO:0005524">
    <property type="term" value="F:ATP binding"/>
    <property type="evidence" value="ECO:0007669"/>
    <property type="project" value="UniProtKB-UniRule"/>
</dbReference>
<dbReference type="GO" id="GO:0016887">
    <property type="term" value="F:ATP hydrolysis activity"/>
    <property type="evidence" value="ECO:0007669"/>
    <property type="project" value="InterPro"/>
</dbReference>
<dbReference type="GO" id="GO:0003677">
    <property type="term" value="F:DNA binding"/>
    <property type="evidence" value="ECO:0007669"/>
    <property type="project" value="UniProtKB-UniRule"/>
</dbReference>
<dbReference type="GO" id="GO:0009381">
    <property type="term" value="F:excinuclease ABC activity"/>
    <property type="evidence" value="ECO:0007669"/>
    <property type="project" value="UniProtKB-UniRule"/>
</dbReference>
<dbReference type="GO" id="GO:0004386">
    <property type="term" value="F:helicase activity"/>
    <property type="evidence" value="ECO:0007669"/>
    <property type="project" value="UniProtKB-KW"/>
</dbReference>
<dbReference type="GO" id="GO:0006289">
    <property type="term" value="P:nucleotide-excision repair"/>
    <property type="evidence" value="ECO:0007669"/>
    <property type="project" value="UniProtKB-UniRule"/>
</dbReference>
<dbReference type="GO" id="GO:0009432">
    <property type="term" value="P:SOS response"/>
    <property type="evidence" value="ECO:0007669"/>
    <property type="project" value="UniProtKB-UniRule"/>
</dbReference>
<dbReference type="CDD" id="cd17916">
    <property type="entry name" value="DEXHc_UvrB"/>
    <property type="match status" value="1"/>
</dbReference>
<dbReference type="CDD" id="cd18790">
    <property type="entry name" value="SF2_C_UvrB"/>
    <property type="match status" value="1"/>
</dbReference>
<dbReference type="Gene3D" id="3.40.50.300">
    <property type="entry name" value="P-loop containing nucleotide triphosphate hydrolases"/>
    <property type="match status" value="3"/>
</dbReference>
<dbReference type="Gene3D" id="4.10.860.10">
    <property type="entry name" value="UVR domain"/>
    <property type="match status" value="1"/>
</dbReference>
<dbReference type="HAMAP" id="MF_00204">
    <property type="entry name" value="UvrB"/>
    <property type="match status" value="1"/>
</dbReference>
<dbReference type="InterPro" id="IPR006935">
    <property type="entry name" value="Helicase/UvrB_N"/>
</dbReference>
<dbReference type="InterPro" id="IPR014001">
    <property type="entry name" value="Helicase_ATP-bd"/>
</dbReference>
<dbReference type="InterPro" id="IPR001650">
    <property type="entry name" value="Helicase_C-like"/>
</dbReference>
<dbReference type="InterPro" id="IPR027417">
    <property type="entry name" value="P-loop_NTPase"/>
</dbReference>
<dbReference type="InterPro" id="IPR001943">
    <property type="entry name" value="UVR_dom"/>
</dbReference>
<dbReference type="InterPro" id="IPR036876">
    <property type="entry name" value="UVR_dom_sf"/>
</dbReference>
<dbReference type="InterPro" id="IPR004807">
    <property type="entry name" value="UvrB"/>
</dbReference>
<dbReference type="InterPro" id="IPR041471">
    <property type="entry name" value="UvrB_inter"/>
</dbReference>
<dbReference type="InterPro" id="IPR024759">
    <property type="entry name" value="UvrB_YAD/RRR_dom"/>
</dbReference>
<dbReference type="NCBIfam" id="NF003673">
    <property type="entry name" value="PRK05298.1"/>
    <property type="match status" value="1"/>
</dbReference>
<dbReference type="NCBIfam" id="TIGR00631">
    <property type="entry name" value="uvrb"/>
    <property type="match status" value="1"/>
</dbReference>
<dbReference type="PANTHER" id="PTHR24029">
    <property type="entry name" value="UVRABC SYSTEM PROTEIN B"/>
    <property type="match status" value="1"/>
</dbReference>
<dbReference type="PANTHER" id="PTHR24029:SF0">
    <property type="entry name" value="UVRABC SYSTEM PROTEIN B"/>
    <property type="match status" value="1"/>
</dbReference>
<dbReference type="Pfam" id="PF00271">
    <property type="entry name" value="Helicase_C"/>
    <property type="match status" value="1"/>
</dbReference>
<dbReference type="Pfam" id="PF04851">
    <property type="entry name" value="ResIII"/>
    <property type="match status" value="1"/>
</dbReference>
<dbReference type="Pfam" id="PF02151">
    <property type="entry name" value="UVR"/>
    <property type="match status" value="1"/>
</dbReference>
<dbReference type="Pfam" id="PF12344">
    <property type="entry name" value="UvrB"/>
    <property type="match status" value="1"/>
</dbReference>
<dbReference type="Pfam" id="PF17757">
    <property type="entry name" value="UvrB_inter"/>
    <property type="match status" value="1"/>
</dbReference>
<dbReference type="SMART" id="SM00487">
    <property type="entry name" value="DEXDc"/>
    <property type="match status" value="1"/>
</dbReference>
<dbReference type="SMART" id="SM00490">
    <property type="entry name" value="HELICc"/>
    <property type="match status" value="1"/>
</dbReference>
<dbReference type="SUPFAM" id="SSF46600">
    <property type="entry name" value="C-terminal UvrC-binding domain of UvrB"/>
    <property type="match status" value="1"/>
</dbReference>
<dbReference type="SUPFAM" id="SSF52540">
    <property type="entry name" value="P-loop containing nucleoside triphosphate hydrolases"/>
    <property type="match status" value="2"/>
</dbReference>
<dbReference type="PROSITE" id="PS51192">
    <property type="entry name" value="HELICASE_ATP_BIND_1"/>
    <property type="match status" value="2"/>
</dbReference>
<dbReference type="PROSITE" id="PS51194">
    <property type="entry name" value="HELICASE_CTER"/>
    <property type="match status" value="1"/>
</dbReference>
<dbReference type="PROSITE" id="PS50151">
    <property type="entry name" value="UVR"/>
    <property type="match status" value="1"/>
</dbReference>
<proteinExistence type="inferred from homology"/>
<feature type="chain" id="PRO_1000077893" description="UvrABC system protein B">
    <location>
        <begin position="1"/>
        <end position="658"/>
    </location>
</feature>
<feature type="domain" description="Helicase ATP-binding" evidence="1">
    <location>
        <begin position="25"/>
        <end position="178"/>
    </location>
</feature>
<feature type="domain" description="Helicase C-terminal" evidence="1">
    <location>
        <begin position="433"/>
        <end position="607"/>
    </location>
</feature>
<feature type="domain" description="UVR" evidence="1">
    <location>
        <begin position="623"/>
        <end position="658"/>
    </location>
</feature>
<feature type="short sequence motif" description="Beta-hairpin">
    <location>
        <begin position="91"/>
        <end position="114"/>
    </location>
</feature>
<feature type="binding site" evidence="1">
    <location>
        <begin position="38"/>
        <end position="45"/>
    </location>
    <ligand>
        <name>ATP</name>
        <dbReference type="ChEBI" id="CHEBI:30616"/>
    </ligand>
</feature>
<organism>
    <name type="scientific">Helicobacter acinonychis (strain Sheeba)</name>
    <dbReference type="NCBI Taxonomy" id="382638"/>
    <lineage>
        <taxon>Bacteria</taxon>
        <taxon>Pseudomonadati</taxon>
        <taxon>Campylobacterota</taxon>
        <taxon>Epsilonproteobacteria</taxon>
        <taxon>Campylobacterales</taxon>
        <taxon>Helicobacteraceae</taxon>
        <taxon>Helicobacter</taxon>
    </lineage>
</organism>
<protein>
    <recommendedName>
        <fullName evidence="1">UvrABC system protein B</fullName>
        <shortName evidence="1">Protein UvrB</shortName>
    </recommendedName>
    <alternativeName>
        <fullName evidence="1">Excinuclease ABC subunit B</fullName>
    </alternativeName>
</protein>
<keyword id="KW-0067">ATP-binding</keyword>
<keyword id="KW-0963">Cytoplasm</keyword>
<keyword id="KW-0227">DNA damage</keyword>
<keyword id="KW-0228">DNA excision</keyword>
<keyword id="KW-0234">DNA repair</keyword>
<keyword id="KW-0267">Excision nuclease</keyword>
<keyword id="KW-0347">Helicase</keyword>
<keyword id="KW-0378">Hydrolase</keyword>
<keyword id="KW-0547">Nucleotide-binding</keyword>
<keyword id="KW-0742">SOS response</keyword>